<keyword id="KW-0067">ATP-binding</keyword>
<keyword id="KW-0418">Kinase</keyword>
<keyword id="KW-0460">Magnesium</keyword>
<keyword id="KW-0479">Metal-binding</keyword>
<keyword id="KW-0547">Nucleotide-binding</keyword>
<keyword id="KW-1185">Reference proteome</keyword>
<keyword id="KW-0723">Serine/threonine-protein kinase</keyword>
<keyword id="KW-0808">Transferase</keyword>
<comment type="catalytic activity">
    <reaction evidence="2">
        <text>L-seryl-[protein] + ATP = O-phospho-L-seryl-[protein] + ADP + H(+)</text>
        <dbReference type="Rhea" id="RHEA:17989"/>
        <dbReference type="Rhea" id="RHEA-COMP:9863"/>
        <dbReference type="Rhea" id="RHEA-COMP:11604"/>
        <dbReference type="ChEBI" id="CHEBI:15378"/>
        <dbReference type="ChEBI" id="CHEBI:29999"/>
        <dbReference type="ChEBI" id="CHEBI:30616"/>
        <dbReference type="ChEBI" id="CHEBI:83421"/>
        <dbReference type="ChEBI" id="CHEBI:456216"/>
        <dbReference type="EC" id="2.7.11.1"/>
    </reaction>
</comment>
<comment type="catalytic activity">
    <reaction evidence="2">
        <text>L-threonyl-[protein] + ATP = O-phospho-L-threonyl-[protein] + ADP + H(+)</text>
        <dbReference type="Rhea" id="RHEA:46608"/>
        <dbReference type="Rhea" id="RHEA-COMP:11060"/>
        <dbReference type="Rhea" id="RHEA-COMP:11605"/>
        <dbReference type="ChEBI" id="CHEBI:15378"/>
        <dbReference type="ChEBI" id="CHEBI:30013"/>
        <dbReference type="ChEBI" id="CHEBI:30616"/>
        <dbReference type="ChEBI" id="CHEBI:61977"/>
        <dbReference type="ChEBI" id="CHEBI:456216"/>
        <dbReference type="EC" id="2.7.11.1"/>
    </reaction>
</comment>
<comment type="cofactor">
    <cofactor evidence="1">
        <name>Mg(2+)</name>
        <dbReference type="ChEBI" id="CHEBI:18420"/>
    </cofactor>
</comment>
<comment type="similarity">
    <text evidence="2">Belongs to the protein kinase superfamily. STE Ser/Thr protein kinase family. STE20 subfamily.</text>
</comment>
<gene>
    <name evidence="7" type="primary">dst4</name>
    <name type="synonym">dstD</name>
    <name type="ORF">DDB_G0288071</name>
</gene>
<accession>Q54JG7</accession>
<dbReference type="EC" id="2.7.11.1"/>
<dbReference type="EMBL" id="AAFI02000109">
    <property type="protein sequence ID" value="EAL63380.1"/>
    <property type="molecule type" value="Genomic_DNA"/>
</dbReference>
<dbReference type="RefSeq" id="XP_636883.1">
    <property type="nucleotide sequence ID" value="XM_631791.1"/>
</dbReference>
<dbReference type="SMR" id="Q54JG7"/>
<dbReference type="FunCoup" id="Q54JG7">
    <property type="interactions" value="93"/>
</dbReference>
<dbReference type="PaxDb" id="44689-DDB0216374"/>
<dbReference type="EnsemblProtists" id="EAL63380">
    <property type="protein sequence ID" value="EAL63380"/>
    <property type="gene ID" value="DDB_G0288071"/>
</dbReference>
<dbReference type="GeneID" id="8626439"/>
<dbReference type="KEGG" id="ddi:DDB_G0288071"/>
<dbReference type="dictyBase" id="DDB_G0288071">
    <property type="gene designation" value="dst4"/>
</dbReference>
<dbReference type="VEuPathDB" id="AmoebaDB:DDB_G0288071"/>
<dbReference type="eggNOG" id="KOG0574">
    <property type="taxonomic scope" value="Eukaryota"/>
</dbReference>
<dbReference type="HOGENOM" id="CLU_000288_63_23_1"/>
<dbReference type="InParanoid" id="Q54JG7"/>
<dbReference type="OMA" id="NTGFKQK"/>
<dbReference type="PhylomeDB" id="Q54JG7"/>
<dbReference type="PRO" id="PR:Q54JG7"/>
<dbReference type="Proteomes" id="UP000002195">
    <property type="component" value="Chromosome 5"/>
</dbReference>
<dbReference type="GO" id="GO:0005737">
    <property type="term" value="C:cytoplasm"/>
    <property type="evidence" value="ECO:0000250"/>
    <property type="project" value="dictyBase"/>
</dbReference>
<dbReference type="GO" id="GO:0005634">
    <property type="term" value="C:nucleus"/>
    <property type="evidence" value="ECO:0000250"/>
    <property type="project" value="dictyBase"/>
</dbReference>
<dbReference type="GO" id="GO:0005524">
    <property type="term" value="F:ATP binding"/>
    <property type="evidence" value="ECO:0007669"/>
    <property type="project" value="UniProtKB-KW"/>
</dbReference>
<dbReference type="GO" id="GO:0046872">
    <property type="term" value="F:metal ion binding"/>
    <property type="evidence" value="ECO:0007669"/>
    <property type="project" value="UniProtKB-KW"/>
</dbReference>
<dbReference type="GO" id="GO:0106310">
    <property type="term" value="F:protein serine kinase activity"/>
    <property type="evidence" value="ECO:0007669"/>
    <property type="project" value="RHEA"/>
</dbReference>
<dbReference type="GO" id="GO:0004674">
    <property type="term" value="F:protein serine/threonine kinase activity"/>
    <property type="evidence" value="ECO:0000250"/>
    <property type="project" value="dictyBase"/>
</dbReference>
<dbReference type="GO" id="GO:0035556">
    <property type="term" value="P:intracellular signal transduction"/>
    <property type="evidence" value="ECO:0000318"/>
    <property type="project" value="GO_Central"/>
</dbReference>
<dbReference type="GO" id="GO:0090090">
    <property type="term" value="P:negative regulation of canonical Wnt signaling pathway"/>
    <property type="evidence" value="ECO:0000318"/>
    <property type="project" value="GO_Central"/>
</dbReference>
<dbReference type="GO" id="GO:0043065">
    <property type="term" value="P:positive regulation of apoptotic process"/>
    <property type="evidence" value="ECO:0000318"/>
    <property type="project" value="GO_Central"/>
</dbReference>
<dbReference type="GO" id="GO:0012501">
    <property type="term" value="P:programmed cell death"/>
    <property type="evidence" value="ECO:0000250"/>
    <property type="project" value="dictyBase"/>
</dbReference>
<dbReference type="GO" id="GO:0006468">
    <property type="term" value="P:protein phosphorylation"/>
    <property type="evidence" value="ECO:0000250"/>
    <property type="project" value="dictyBase"/>
</dbReference>
<dbReference type="GO" id="GO:0043408">
    <property type="term" value="P:regulation of MAPK cascade"/>
    <property type="evidence" value="ECO:0000318"/>
    <property type="project" value="GO_Central"/>
</dbReference>
<dbReference type="GO" id="GO:0007165">
    <property type="term" value="P:signal transduction"/>
    <property type="evidence" value="ECO:0000250"/>
    <property type="project" value="dictyBase"/>
</dbReference>
<dbReference type="CDD" id="cd06612">
    <property type="entry name" value="STKc_MST1_2"/>
    <property type="match status" value="1"/>
</dbReference>
<dbReference type="FunFam" id="1.10.510.10:FF:000966">
    <property type="entry name" value="Serine/threonine-protein kinase 3, putative"/>
    <property type="match status" value="1"/>
</dbReference>
<dbReference type="Gene3D" id="1.10.510.10">
    <property type="entry name" value="Transferase(Phosphotransferase) domain 1"/>
    <property type="match status" value="1"/>
</dbReference>
<dbReference type="InterPro" id="IPR011009">
    <property type="entry name" value="Kinase-like_dom_sf"/>
</dbReference>
<dbReference type="InterPro" id="IPR000719">
    <property type="entry name" value="Prot_kinase_dom"/>
</dbReference>
<dbReference type="InterPro" id="IPR017441">
    <property type="entry name" value="Protein_kinase_ATP_BS"/>
</dbReference>
<dbReference type="InterPro" id="IPR008271">
    <property type="entry name" value="Ser/Thr_kinase_AS"/>
</dbReference>
<dbReference type="InterPro" id="IPR050629">
    <property type="entry name" value="STE20/SPS1-PAK"/>
</dbReference>
<dbReference type="PANTHER" id="PTHR48012:SF2">
    <property type="entry name" value="STERILE20-LIKE KINASE, ISOFORM B"/>
    <property type="match status" value="1"/>
</dbReference>
<dbReference type="PANTHER" id="PTHR48012">
    <property type="entry name" value="STERILE20-LIKE KINASE, ISOFORM B-RELATED"/>
    <property type="match status" value="1"/>
</dbReference>
<dbReference type="Pfam" id="PF00069">
    <property type="entry name" value="Pkinase"/>
    <property type="match status" value="1"/>
</dbReference>
<dbReference type="SMART" id="SM00220">
    <property type="entry name" value="S_TKc"/>
    <property type="match status" value="1"/>
</dbReference>
<dbReference type="SUPFAM" id="SSF56112">
    <property type="entry name" value="Protein kinase-like (PK-like)"/>
    <property type="match status" value="1"/>
</dbReference>
<dbReference type="PROSITE" id="PS00107">
    <property type="entry name" value="PROTEIN_KINASE_ATP"/>
    <property type="match status" value="1"/>
</dbReference>
<dbReference type="PROSITE" id="PS50011">
    <property type="entry name" value="PROTEIN_KINASE_DOM"/>
    <property type="match status" value="1"/>
</dbReference>
<dbReference type="PROSITE" id="PS00108">
    <property type="entry name" value="PROTEIN_KINASE_ST"/>
    <property type="match status" value="1"/>
</dbReference>
<protein>
    <recommendedName>
        <fullName evidence="2">Serine/threonine-protein kinase dst4</fullName>
        <ecNumber>2.7.11.1</ecNumber>
    </recommendedName>
</protein>
<feature type="chain" id="PRO_0000352764" description="Serine/threonine-protein kinase dst4">
    <location>
        <begin position="1"/>
        <end position="485"/>
    </location>
</feature>
<feature type="domain" description="Protein kinase" evidence="4">
    <location>
        <begin position="21"/>
        <end position="278"/>
    </location>
</feature>
<feature type="region of interest" description="Disordered" evidence="6">
    <location>
        <begin position="304"/>
        <end position="343"/>
    </location>
</feature>
<feature type="region of interest" description="Disordered" evidence="6">
    <location>
        <begin position="360"/>
        <end position="424"/>
    </location>
</feature>
<feature type="region of interest" description="Disordered" evidence="6">
    <location>
        <begin position="436"/>
        <end position="485"/>
    </location>
</feature>
<feature type="compositionally biased region" description="Acidic residues" evidence="6">
    <location>
        <begin position="310"/>
        <end position="324"/>
    </location>
</feature>
<feature type="compositionally biased region" description="Low complexity" evidence="6">
    <location>
        <begin position="370"/>
        <end position="393"/>
    </location>
</feature>
<feature type="compositionally biased region" description="Acidic residues" evidence="6">
    <location>
        <begin position="406"/>
        <end position="417"/>
    </location>
</feature>
<feature type="compositionally biased region" description="Acidic residues" evidence="6">
    <location>
        <begin position="450"/>
        <end position="468"/>
    </location>
</feature>
<feature type="compositionally biased region" description="Polar residues" evidence="6">
    <location>
        <begin position="474"/>
        <end position="485"/>
    </location>
</feature>
<feature type="active site" description="Proton acceptor" evidence="3 4 5">
    <location>
        <position position="142"/>
    </location>
</feature>
<feature type="binding site" evidence="4">
    <location>
        <begin position="27"/>
        <end position="35"/>
    </location>
    <ligand>
        <name>ATP</name>
        <dbReference type="ChEBI" id="CHEBI:30616"/>
    </ligand>
</feature>
<feature type="binding site" evidence="3 4">
    <location>
        <position position="50"/>
    </location>
    <ligand>
        <name>ATP</name>
        <dbReference type="ChEBI" id="CHEBI:30616"/>
    </ligand>
</feature>
<name>DST4_DICDI</name>
<evidence type="ECO:0000250" key="1"/>
<evidence type="ECO:0000250" key="2">
    <source>
        <dbReference type="UniProtKB" id="O61125"/>
    </source>
</evidence>
<evidence type="ECO:0000250" key="3">
    <source>
        <dbReference type="UniProtKB" id="P28523"/>
    </source>
</evidence>
<evidence type="ECO:0000255" key="4">
    <source>
        <dbReference type="PROSITE-ProRule" id="PRU00159"/>
    </source>
</evidence>
<evidence type="ECO:0000255" key="5">
    <source>
        <dbReference type="PROSITE-ProRule" id="PRU10027"/>
    </source>
</evidence>
<evidence type="ECO:0000256" key="6">
    <source>
        <dbReference type="SAM" id="MobiDB-lite"/>
    </source>
</evidence>
<evidence type="ECO:0000312" key="7">
    <source>
        <dbReference type="EMBL" id="EAL63380.1"/>
    </source>
</evidence>
<reference key="1">
    <citation type="journal article" date="2005" name="Nature">
        <title>The genome of the social amoeba Dictyostelium discoideum.</title>
        <authorList>
            <person name="Eichinger L."/>
            <person name="Pachebat J.A."/>
            <person name="Gloeckner G."/>
            <person name="Rajandream M.A."/>
            <person name="Sucgang R."/>
            <person name="Berriman M."/>
            <person name="Song J."/>
            <person name="Olsen R."/>
            <person name="Szafranski K."/>
            <person name="Xu Q."/>
            <person name="Tunggal B."/>
            <person name="Kummerfeld S."/>
            <person name="Madera M."/>
            <person name="Konfortov B.A."/>
            <person name="Rivero F."/>
            <person name="Bankier A.T."/>
            <person name="Lehmann R."/>
            <person name="Hamlin N."/>
            <person name="Davies R."/>
            <person name="Gaudet P."/>
            <person name="Fey P."/>
            <person name="Pilcher K."/>
            <person name="Chen G."/>
            <person name="Saunders D."/>
            <person name="Sodergren E.J."/>
            <person name="Davis P."/>
            <person name="Kerhornou A."/>
            <person name="Nie X."/>
            <person name="Hall N."/>
            <person name="Anjard C."/>
            <person name="Hemphill L."/>
            <person name="Bason N."/>
            <person name="Farbrother P."/>
            <person name="Desany B."/>
            <person name="Just E."/>
            <person name="Morio T."/>
            <person name="Rost R."/>
            <person name="Churcher C.M."/>
            <person name="Cooper J."/>
            <person name="Haydock S."/>
            <person name="van Driessche N."/>
            <person name="Cronin A."/>
            <person name="Goodhead I."/>
            <person name="Muzny D.M."/>
            <person name="Mourier T."/>
            <person name="Pain A."/>
            <person name="Lu M."/>
            <person name="Harper D."/>
            <person name="Lindsay R."/>
            <person name="Hauser H."/>
            <person name="James K.D."/>
            <person name="Quiles M."/>
            <person name="Madan Babu M."/>
            <person name="Saito T."/>
            <person name="Buchrieser C."/>
            <person name="Wardroper A."/>
            <person name="Felder M."/>
            <person name="Thangavelu M."/>
            <person name="Johnson D."/>
            <person name="Knights A."/>
            <person name="Loulseged H."/>
            <person name="Mungall K.L."/>
            <person name="Oliver K."/>
            <person name="Price C."/>
            <person name="Quail M.A."/>
            <person name="Urushihara H."/>
            <person name="Hernandez J."/>
            <person name="Rabbinowitsch E."/>
            <person name="Steffen D."/>
            <person name="Sanders M."/>
            <person name="Ma J."/>
            <person name="Kohara Y."/>
            <person name="Sharp S."/>
            <person name="Simmonds M.N."/>
            <person name="Spiegler S."/>
            <person name="Tivey A."/>
            <person name="Sugano S."/>
            <person name="White B."/>
            <person name="Walker D."/>
            <person name="Woodward J.R."/>
            <person name="Winckler T."/>
            <person name="Tanaka Y."/>
            <person name="Shaulsky G."/>
            <person name="Schleicher M."/>
            <person name="Weinstock G.M."/>
            <person name="Rosenthal A."/>
            <person name="Cox E.C."/>
            <person name="Chisholm R.L."/>
            <person name="Gibbs R.A."/>
            <person name="Loomis W.F."/>
            <person name="Platzer M."/>
            <person name="Kay R.R."/>
            <person name="Williams J.G."/>
            <person name="Dear P.H."/>
            <person name="Noegel A.A."/>
            <person name="Barrell B.G."/>
            <person name="Kuspa A."/>
        </authorList>
    </citation>
    <scope>NUCLEOTIDE SEQUENCE [LARGE SCALE GENOMIC DNA]</scope>
    <source>
        <strain>AX4</strain>
    </source>
</reference>
<reference key="2">
    <citation type="journal article" date="2006" name="Eur. J. Cell Biol.">
        <title>Characterization of the Ste20-like kinase Krs1 of Dictyostelium discoideum.</title>
        <authorList>
            <person name="Arasada R."/>
            <person name="Son H."/>
            <person name="Ramalingam N."/>
            <person name="Eichinger L."/>
            <person name="Schleicher M."/>
            <person name="Rohlfs M."/>
        </authorList>
    </citation>
    <scope>IDENTIFICATION</scope>
</reference>
<sequence>MDNVDKTMKSEISEEDPEQLFRVLEVIGQGSFGVVCTCINTVNNEVVAIKFLEMEGEENSSLKKEITILKNTVRCPYIVKYHGCYIKENNLMIVMEYCDGGSILDIMQMCSITLTEAQIAAILYQIVEGLVYLHSNKILHRDIKAGNVLVNKLGQAKLADFGVSAILVNTGFKQKTVVGSPYWMSPEVISPPKGSNGYDSKADIWSLGITAIEMAESKPPLFNLNPVKVIFVIPFRQAPTLEVPGNWSPEFNDFISVCLNKEADKRPSAVDLLNHPFIKKGKEHSQPTISEMVEQCIPTMKEYRRKKAEEEEAEEAEEGDDYDDVNGGGDERQHGSSVSSAGLQKGTLLKINTITQRATVMREDGTEDTSNNGGTFIYNNNNNNSSKTSSSGTVVFSKNGSIIKNDDDDDDDIEEGGFDSGSVVFKGSTLVEKFESMKLKYNKRRQQQESSDEEDEEDEDDEDDEEGGFDSGSVVYTKSPVNQDD</sequence>
<proteinExistence type="inferred from homology"/>
<organism>
    <name type="scientific">Dictyostelium discoideum</name>
    <name type="common">Social amoeba</name>
    <dbReference type="NCBI Taxonomy" id="44689"/>
    <lineage>
        <taxon>Eukaryota</taxon>
        <taxon>Amoebozoa</taxon>
        <taxon>Evosea</taxon>
        <taxon>Eumycetozoa</taxon>
        <taxon>Dictyostelia</taxon>
        <taxon>Dictyosteliales</taxon>
        <taxon>Dictyosteliaceae</taxon>
        <taxon>Dictyostelium</taxon>
    </lineage>
</organism>